<name>MURG_COXBU</name>
<reference key="1">
    <citation type="journal article" date="2003" name="Proc. Natl. Acad. Sci. U.S.A.">
        <title>Complete genome sequence of the Q-fever pathogen, Coxiella burnetii.</title>
        <authorList>
            <person name="Seshadri R."/>
            <person name="Paulsen I.T."/>
            <person name="Eisen J.A."/>
            <person name="Read T.D."/>
            <person name="Nelson K.E."/>
            <person name="Nelson W.C."/>
            <person name="Ward N.L."/>
            <person name="Tettelin H."/>
            <person name="Davidsen T.M."/>
            <person name="Beanan M.J."/>
            <person name="DeBoy R.T."/>
            <person name="Daugherty S.C."/>
            <person name="Brinkac L.M."/>
            <person name="Madupu R."/>
            <person name="Dodson R.J."/>
            <person name="Khouri H.M."/>
            <person name="Lee K.H."/>
            <person name="Carty H.A."/>
            <person name="Scanlan D."/>
            <person name="Heinzen R.A."/>
            <person name="Thompson H.A."/>
            <person name="Samuel J.E."/>
            <person name="Fraser C.M."/>
            <person name="Heidelberg J.F."/>
        </authorList>
    </citation>
    <scope>NUCLEOTIDE SEQUENCE [LARGE SCALE GENOMIC DNA]</scope>
    <source>
        <strain>RSA 493 / Nine Mile phase I</strain>
    </source>
</reference>
<organism>
    <name type="scientific">Coxiella burnetii (strain RSA 493 / Nine Mile phase I)</name>
    <dbReference type="NCBI Taxonomy" id="227377"/>
    <lineage>
        <taxon>Bacteria</taxon>
        <taxon>Pseudomonadati</taxon>
        <taxon>Pseudomonadota</taxon>
        <taxon>Gammaproteobacteria</taxon>
        <taxon>Legionellales</taxon>
        <taxon>Coxiellaceae</taxon>
        <taxon>Coxiella</taxon>
    </lineage>
</organism>
<proteinExistence type="inferred from homology"/>
<accession>Q820X3</accession>
<evidence type="ECO:0000255" key="1">
    <source>
        <dbReference type="HAMAP-Rule" id="MF_00033"/>
    </source>
</evidence>
<protein>
    <recommendedName>
        <fullName evidence="1">UDP-N-acetylglucosamine--N-acetylmuramyl-(pentapeptide) pyrophosphoryl-undecaprenol N-acetylglucosamine transferase</fullName>
        <ecNumber evidence="1">2.4.1.227</ecNumber>
    </recommendedName>
    <alternativeName>
        <fullName evidence="1">Undecaprenyl-PP-MurNAc-pentapeptide-UDPGlcNAc GlcNAc transferase</fullName>
    </alternativeName>
</protein>
<keyword id="KW-0131">Cell cycle</keyword>
<keyword id="KW-0132">Cell division</keyword>
<keyword id="KW-0997">Cell inner membrane</keyword>
<keyword id="KW-1003">Cell membrane</keyword>
<keyword id="KW-0133">Cell shape</keyword>
<keyword id="KW-0961">Cell wall biogenesis/degradation</keyword>
<keyword id="KW-0328">Glycosyltransferase</keyword>
<keyword id="KW-0472">Membrane</keyword>
<keyword id="KW-0573">Peptidoglycan synthesis</keyword>
<keyword id="KW-1185">Reference proteome</keyword>
<keyword id="KW-0808">Transferase</keyword>
<gene>
    <name evidence="1" type="primary">murG</name>
    <name type="ordered locus">CBU_0135</name>
</gene>
<dbReference type="EC" id="2.4.1.227" evidence="1"/>
<dbReference type="EMBL" id="AE016828">
    <property type="protein sequence ID" value="AAO89699.1"/>
    <property type="molecule type" value="Genomic_DNA"/>
</dbReference>
<dbReference type="RefSeq" id="NP_819185.1">
    <property type="nucleotide sequence ID" value="NC_002971.4"/>
</dbReference>
<dbReference type="RefSeq" id="WP_005769484.1">
    <property type="nucleotide sequence ID" value="NZ_CDBG01000001.1"/>
</dbReference>
<dbReference type="SMR" id="Q820X3"/>
<dbReference type="STRING" id="227377.CBU_0135"/>
<dbReference type="CAZy" id="GT28">
    <property type="family name" value="Glycosyltransferase Family 28"/>
</dbReference>
<dbReference type="EnsemblBacteria" id="AAO89699">
    <property type="protein sequence ID" value="AAO89699"/>
    <property type="gene ID" value="CBU_0135"/>
</dbReference>
<dbReference type="GeneID" id="1208006"/>
<dbReference type="KEGG" id="cbu:CBU_0135"/>
<dbReference type="PATRIC" id="fig|227377.7.peg.137"/>
<dbReference type="eggNOG" id="COG0707">
    <property type="taxonomic scope" value="Bacteria"/>
</dbReference>
<dbReference type="HOGENOM" id="CLU_037404_2_0_6"/>
<dbReference type="OrthoDB" id="9808936at2"/>
<dbReference type="UniPathway" id="UPA00219"/>
<dbReference type="Proteomes" id="UP000002671">
    <property type="component" value="Chromosome"/>
</dbReference>
<dbReference type="GO" id="GO:0005886">
    <property type="term" value="C:plasma membrane"/>
    <property type="evidence" value="ECO:0007669"/>
    <property type="project" value="UniProtKB-SubCell"/>
</dbReference>
<dbReference type="GO" id="GO:0051991">
    <property type="term" value="F:UDP-N-acetyl-D-glucosamine:N-acetylmuramoyl-L-alanyl-D-glutamyl-meso-2,6-diaminopimelyl-D-alanyl-D-alanine-diphosphoundecaprenol 4-beta-N-acetylglucosaminlytransferase activity"/>
    <property type="evidence" value="ECO:0007669"/>
    <property type="project" value="RHEA"/>
</dbReference>
<dbReference type="GO" id="GO:0050511">
    <property type="term" value="F:undecaprenyldiphospho-muramoylpentapeptide beta-N-acetylglucosaminyltransferase activity"/>
    <property type="evidence" value="ECO:0000318"/>
    <property type="project" value="GO_Central"/>
</dbReference>
<dbReference type="GO" id="GO:0005975">
    <property type="term" value="P:carbohydrate metabolic process"/>
    <property type="evidence" value="ECO:0007669"/>
    <property type="project" value="InterPro"/>
</dbReference>
<dbReference type="GO" id="GO:0051301">
    <property type="term" value="P:cell division"/>
    <property type="evidence" value="ECO:0007669"/>
    <property type="project" value="UniProtKB-KW"/>
</dbReference>
<dbReference type="GO" id="GO:0071555">
    <property type="term" value="P:cell wall organization"/>
    <property type="evidence" value="ECO:0007669"/>
    <property type="project" value="UniProtKB-KW"/>
</dbReference>
<dbReference type="GO" id="GO:0030259">
    <property type="term" value="P:lipid glycosylation"/>
    <property type="evidence" value="ECO:0007669"/>
    <property type="project" value="UniProtKB-UniRule"/>
</dbReference>
<dbReference type="GO" id="GO:0009252">
    <property type="term" value="P:peptidoglycan biosynthetic process"/>
    <property type="evidence" value="ECO:0007669"/>
    <property type="project" value="UniProtKB-UniRule"/>
</dbReference>
<dbReference type="GO" id="GO:0008360">
    <property type="term" value="P:regulation of cell shape"/>
    <property type="evidence" value="ECO:0007669"/>
    <property type="project" value="UniProtKB-KW"/>
</dbReference>
<dbReference type="CDD" id="cd03785">
    <property type="entry name" value="GT28_MurG"/>
    <property type="match status" value="1"/>
</dbReference>
<dbReference type="Gene3D" id="3.40.50.2000">
    <property type="entry name" value="Glycogen Phosphorylase B"/>
    <property type="match status" value="2"/>
</dbReference>
<dbReference type="HAMAP" id="MF_00033">
    <property type="entry name" value="MurG"/>
    <property type="match status" value="1"/>
</dbReference>
<dbReference type="InterPro" id="IPR006009">
    <property type="entry name" value="GlcNAc_MurG"/>
</dbReference>
<dbReference type="InterPro" id="IPR007235">
    <property type="entry name" value="Glyco_trans_28_C"/>
</dbReference>
<dbReference type="InterPro" id="IPR004276">
    <property type="entry name" value="GlycoTrans_28_N"/>
</dbReference>
<dbReference type="NCBIfam" id="TIGR01133">
    <property type="entry name" value="murG"/>
    <property type="match status" value="1"/>
</dbReference>
<dbReference type="PANTHER" id="PTHR21015:SF22">
    <property type="entry name" value="GLYCOSYLTRANSFERASE"/>
    <property type="match status" value="1"/>
</dbReference>
<dbReference type="PANTHER" id="PTHR21015">
    <property type="entry name" value="UDP-N-ACETYLGLUCOSAMINE--N-ACETYLMURAMYL-(PENTAPEPTIDE) PYROPHOSPHORYL-UNDECAPRENOL N-ACETYLGLUCOSAMINE TRANSFERASE 1"/>
    <property type="match status" value="1"/>
</dbReference>
<dbReference type="Pfam" id="PF04101">
    <property type="entry name" value="Glyco_tran_28_C"/>
    <property type="match status" value="1"/>
</dbReference>
<dbReference type="Pfam" id="PF03033">
    <property type="entry name" value="Glyco_transf_28"/>
    <property type="match status" value="1"/>
</dbReference>
<dbReference type="SUPFAM" id="SSF53756">
    <property type="entry name" value="UDP-Glycosyltransferase/glycogen phosphorylase"/>
    <property type="match status" value="1"/>
</dbReference>
<feature type="chain" id="PRO_0000109169" description="UDP-N-acetylglucosamine--N-acetylmuramyl-(pentapeptide) pyrophosphoryl-undecaprenol N-acetylglucosamine transferase">
    <location>
        <begin position="1"/>
        <end position="358"/>
    </location>
</feature>
<feature type="binding site" evidence="1">
    <location>
        <begin position="11"/>
        <end position="13"/>
    </location>
    <ligand>
        <name>UDP-N-acetyl-alpha-D-glucosamine</name>
        <dbReference type="ChEBI" id="CHEBI:57705"/>
    </ligand>
</feature>
<feature type="binding site" evidence="1">
    <location>
        <position position="122"/>
    </location>
    <ligand>
        <name>UDP-N-acetyl-alpha-D-glucosamine</name>
        <dbReference type="ChEBI" id="CHEBI:57705"/>
    </ligand>
</feature>
<feature type="binding site" evidence="1">
    <location>
        <position position="161"/>
    </location>
    <ligand>
        <name>UDP-N-acetyl-alpha-D-glucosamine</name>
        <dbReference type="ChEBI" id="CHEBI:57705"/>
    </ligand>
</feature>
<feature type="binding site" evidence="1">
    <location>
        <position position="189"/>
    </location>
    <ligand>
        <name>UDP-N-acetyl-alpha-D-glucosamine</name>
        <dbReference type="ChEBI" id="CHEBI:57705"/>
    </ligand>
</feature>
<feature type="binding site" evidence="1">
    <location>
        <position position="243"/>
    </location>
    <ligand>
        <name>UDP-N-acetyl-alpha-D-glucosamine</name>
        <dbReference type="ChEBI" id="CHEBI:57705"/>
    </ligand>
</feature>
<feature type="binding site" evidence="1">
    <location>
        <begin position="262"/>
        <end position="267"/>
    </location>
    <ligand>
        <name>UDP-N-acetyl-alpha-D-glucosamine</name>
        <dbReference type="ChEBI" id="CHEBI:57705"/>
    </ligand>
</feature>
<feature type="binding site" evidence="1">
    <location>
        <position position="288"/>
    </location>
    <ligand>
        <name>UDP-N-acetyl-alpha-D-glucosamine</name>
        <dbReference type="ChEBI" id="CHEBI:57705"/>
    </ligand>
</feature>
<sequence length="358" mass="39974">MNRILIIAGGTGGHIFPALAVARELREQEVDVQWLGVKGGLEEKLVPDSFPLHLIQIKAFRGKRGLQQLLMPLRLVRAVFQAYRIIRQFKPDVILGMGGYVAGPGGLAAWITRTPLIIHEQNSIPGLTNRVLAKMAKFILQGFPDTFPQNRKVITTGNPVRTELVKMPLPQVRLAARRGPLRILVLGGSQGARSINQKMLAALSSYPRSEEIAVWHQTGQRDFEFIQKEYEKIKIEAKVDNFISDMAGAYGWADLVVCRAGALTVCEIASVGVASIFIPYPHAVDNHQFHNARFLEQAGAAIIISEESLTETDLMRWFEQFAQDRDRLLTMAENARKLAKPEAVQRVIAQCKKFYAAR</sequence>
<comment type="function">
    <text evidence="1">Cell wall formation. Catalyzes the transfer of a GlcNAc subunit on undecaprenyl-pyrophosphoryl-MurNAc-pentapeptide (lipid intermediate I) to form undecaprenyl-pyrophosphoryl-MurNAc-(pentapeptide)GlcNAc (lipid intermediate II).</text>
</comment>
<comment type="catalytic activity">
    <reaction evidence="1">
        <text>di-trans,octa-cis-undecaprenyl diphospho-N-acetyl-alpha-D-muramoyl-L-alanyl-D-glutamyl-meso-2,6-diaminopimeloyl-D-alanyl-D-alanine + UDP-N-acetyl-alpha-D-glucosamine = di-trans,octa-cis-undecaprenyl diphospho-[N-acetyl-alpha-D-glucosaminyl-(1-&gt;4)]-N-acetyl-alpha-D-muramoyl-L-alanyl-D-glutamyl-meso-2,6-diaminopimeloyl-D-alanyl-D-alanine + UDP + H(+)</text>
        <dbReference type="Rhea" id="RHEA:31227"/>
        <dbReference type="ChEBI" id="CHEBI:15378"/>
        <dbReference type="ChEBI" id="CHEBI:57705"/>
        <dbReference type="ChEBI" id="CHEBI:58223"/>
        <dbReference type="ChEBI" id="CHEBI:61387"/>
        <dbReference type="ChEBI" id="CHEBI:61388"/>
        <dbReference type="EC" id="2.4.1.227"/>
    </reaction>
</comment>
<comment type="pathway">
    <text evidence="1">Cell wall biogenesis; peptidoglycan biosynthesis.</text>
</comment>
<comment type="subcellular location">
    <subcellularLocation>
        <location evidence="1">Cell inner membrane</location>
        <topology evidence="1">Peripheral membrane protein</topology>
        <orientation evidence="1">Cytoplasmic side</orientation>
    </subcellularLocation>
</comment>
<comment type="similarity">
    <text evidence="1">Belongs to the glycosyltransferase 28 family. MurG subfamily.</text>
</comment>